<feature type="chain" id="PRO_0000442719" description="Multifunctional alkaline phosphatase superfamily protein pRL90232">
    <location>
        <begin position="1"/>
        <end position="514"/>
    </location>
</feature>
<feature type="active site" description="Nucleophile" evidence="2">
    <location>
        <position position="57"/>
    </location>
</feature>
<feature type="binding site" evidence="2 7">
    <location>
        <position position="12"/>
    </location>
    <ligand>
        <name>Mn(2+)</name>
        <dbReference type="ChEBI" id="CHEBI:29035"/>
    </ligand>
</feature>
<feature type="binding site" description="via 3-oxoalanine" evidence="2">
    <location>
        <position position="57"/>
    </location>
    <ligand>
        <name>Mn(2+)</name>
        <dbReference type="ChEBI" id="CHEBI:29035"/>
    </ligand>
</feature>
<feature type="binding site" evidence="2 7">
    <location>
        <position position="324"/>
    </location>
    <ligand>
        <name>Mn(2+)</name>
        <dbReference type="ChEBI" id="CHEBI:29035"/>
    </ligand>
</feature>
<feature type="binding site" evidence="2 7">
    <location>
        <position position="325"/>
    </location>
    <ligand>
        <name>Mn(2+)</name>
        <dbReference type="ChEBI" id="CHEBI:29035"/>
    </ligand>
</feature>
<feature type="modified residue" description="3-oxoalanine (Cys)" evidence="1 2">
    <location>
        <position position="57"/>
    </location>
</feature>
<feature type="mutagenesis site" description="Kcat increases 1.6-fold and affinity reduces 14-fold with phosphonate monoester as substrate. kcat increases 1.9-fold and affinity reduces 21.7-fold with phosphate diester as substrate.">
    <original>Q</original>
    <variation>A</variation>
    <location>
        <position position="13"/>
    </location>
</feature>
<feature type="mutagenesis site" description="Kcat reduces 1818-fold and affinity increases 1.1-fold with phosphonate monoester as substrate. kcat reduces 2021-fold and affinity reduces 1.3-fold with phosphate diester as substrate.">
    <original>C</original>
    <variation>A</variation>
    <location>
        <position position="57"/>
    </location>
</feature>
<feature type="mutagenesis site" description="Kcat reduces 4.8-fold and affinity reduces 1.3-fold with phosphonate monoester as substrate. kcat reduces 5.9-fold and affinity increases 1.4-fold with phosphate diester as substrate.">
    <original>C</original>
    <variation>S</variation>
    <location>
        <position position="57"/>
    </location>
</feature>
<feature type="mutagenesis site" description="Kcat reduces 10.7-fold and affinity reduces 1.3-fold with phosphonate monoester as substrate. kcat reduces 8.6-fold and affinity reduces 19.6-fold with phosphate diester as substrate.">
    <original>N</original>
    <variation>A</variation>
    <location>
        <position position="78"/>
    </location>
</feature>
<feature type="mutagenesis site" description="Kcat reduces 5.9-fold and affinity reduces 9.3-fold with phosphonate monoester as substrate. kcat reduces over 55.9-fold and affinity reduces over 30.4-fold with phosphate diester as substrate.">
    <original>Y</original>
    <variation>A</variation>
    <location>
        <position position="105"/>
    </location>
</feature>
<feature type="mutagenesis site" description="Kcat reduces 6.7-fold and affinity increases 9.7-fold with phosphonate monoester as substrate. kcat reduces 16.7-fold and affinity reduces 2.1-fold with phosphate diester as substrate.">
    <original>T</original>
    <variation>A</variation>
    <location>
        <position position="107"/>
    </location>
</feature>
<feature type="mutagenesis site" description="Kcat reduces 16.0-fold and affinity reduces 5-fold with phosphonate monoester as substrate. kcat reduces 31.7-fold and affinity reduces 24.8-fold with phosphate diester as substrate.">
    <original>H</original>
    <variation>A</variation>
    <location>
        <position position="218"/>
    </location>
</feature>
<feature type="mutagenesis site" description="Kcat reduces 1.3-fold and affinity reduces 4.7-fold with phosphonate monoester as substrate. kcat reduces 3.3-fold and affinity reduces 31.7-fold with phosphate diester as substrate.">
    <original>K</original>
    <variation>A</variation>
    <location>
        <position position="337"/>
    </location>
</feature>
<evidence type="ECO:0000255" key="1">
    <source>
        <dbReference type="PIRSR" id="PIRSR600917-51"/>
    </source>
</evidence>
<evidence type="ECO:0000269" key="2">
    <source>
    </source>
</evidence>
<evidence type="ECO:0000303" key="3">
    <source>
    </source>
</evidence>
<evidence type="ECO:0000305" key="4"/>
<evidence type="ECO:0000312" key="5">
    <source>
        <dbReference type="EMBL" id="CAK03956.1"/>
    </source>
</evidence>
<evidence type="ECO:0000312" key="6">
    <source>
        <dbReference type="Proteomes" id="UP000006575"/>
    </source>
</evidence>
<evidence type="ECO:0007744" key="7">
    <source>
        <dbReference type="PDB" id="2VQR"/>
    </source>
</evidence>
<comment type="function">
    <text evidence="2">Hydrolytic enzyme with a broad substrate specificity acting on phosphate diesters and phosphonate monoesters.</text>
</comment>
<comment type="cofactor">
    <cofactor evidence="2">
        <name>Mn(2+)</name>
        <dbReference type="ChEBI" id="CHEBI:29035"/>
    </cofactor>
    <text evidence="3">Mn(2+) is probably the active metal ion. Other metals such as Zn, Ca and Fe can also act as cofactors.</text>
</comment>
<comment type="biophysicochemical properties">
    <kinetics>
        <KM evidence="2">3 mM for phosphonate monoester p-nitrophenyl phenyl phosphonate (at 30 degrees Celsius and pH 7.5)</KM>
        <KM evidence="2">2.3 mM for phosphate diester p-nitrophenyl ethyl phosphate (at 30 degrees Celsius and pH 7.5)</KM>
        <text evidence="2">kcat is 16 sec(-1) with p-nitrophenyl phenyl phosphonate as substrate. kcat is 9.5 sec(-1) with p-nitrophenyl ethyl phosphate as substrate.</text>
    </kinetics>
    <phDependence>
        <text evidence="2">Optimum pH is 7.5.</text>
    </phDependence>
</comment>
<comment type="subunit">
    <text evidence="2">Homotetramer.</text>
</comment>
<comment type="PTM">
    <text evidence="1 2">The conversion to 3-oxoalanine (also known as C-formylglycine, FGly), of a serine or cysteine residue in prokaryotes and of a cysteine residue in eukaryotes, is critical for catalytic activity.</text>
</comment>
<comment type="similarity">
    <text evidence="3">Belongs to the alkaline phosphatase superfamily.</text>
</comment>
<gene>
    <name evidence="5" type="ordered locus">pRL90232</name>
</gene>
<protein>
    <recommendedName>
        <fullName evidence="4">Multifunctional alkaline phosphatase superfamily protein pRL90232</fullName>
    </recommendedName>
    <alternativeName>
        <fullName evidence="3">Phosphodiesterase</fullName>
        <ecNumber evidence="2">3.1.4.-</ecNumber>
    </alternativeName>
    <alternativeName>
        <fullName evidence="3">Phosphonate monoester hydrolase</fullName>
        <shortName evidence="3">RlPMH</shortName>
        <ecNumber evidence="2">3.1.3.-</ecNumber>
    </alternativeName>
</protein>
<reference evidence="5 6" key="1">
    <citation type="journal article" date="2006" name="Genome Biol.">
        <title>The genome of Rhizobium leguminosarum has recognizable core and accessory components.</title>
        <authorList>
            <person name="Young J.P.W."/>
            <person name="Crossman L.C."/>
            <person name="Johnston A.W.B."/>
            <person name="Thomson N.R."/>
            <person name="Ghazoui Z.F."/>
            <person name="Hull K.H."/>
            <person name="Wexler M."/>
            <person name="Curson A.R.J."/>
            <person name="Todd J.D."/>
            <person name="Poole P.S."/>
            <person name="Mauchline T.H."/>
            <person name="East A.K."/>
            <person name="Quail M.A."/>
            <person name="Churcher C."/>
            <person name="Arrowsmith C."/>
            <person name="Cherevach I."/>
            <person name="Chillingworth T."/>
            <person name="Clarke K."/>
            <person name="Cronin A."/>
            <person name="Davis P."/>
            <person name="Fraser A."/>
            <person name="Hance Z."/>
            <person name="Hauser H."/>
            <person name="Jagels K."/>
            <person name="Moule S."/>
            <person name="Mungall K."/>
            <person name="Norbertczak H."/>
            <person name="Rabbinowitsch E."/>
            <person name="Sanders M."/>
            <person name="Simmonds M."/>
            <person name="Whitehead S."/>
            <person name="Parkhill J."/>
        </authorList>
    </citation>
    <scope>NUCLEOTIDE SEQUENCE [LARGE SCALE GENOMIC DNA]</scope>
    <source>
        <strain evidence="5 6">DSM 114642 / LMG 32736 / 3841</strain>
    </source>
</reference>
<reference evidence="7" key="2">
    <citation type="journal article" date="2008" name="J. Mol. Biol.">
        <title>A new member of the alkaline phosphatase superfamily with a formylglycine nucleophile: structural and kinetic characterisation of a phosphonate monoester hydrolase/phosphodiesterase from Rhizobium leguminosarum.</title>
        <authorList>
            <person name="Jonas S."/>
            <person name="van Loo B."/>
            <person name="Hyvonen M."/>
            <person name="Hollfelder F."/>
        </authorList>
    </citation>
    <scope>X-RAY CRYSTALLOGRAPHY (1.42 ANGSTROMS) IN COMPLEX WITH CALCIUM OR MANGANESE</scope>
    <scope>FUNCTION</scope>
    <scope>CATALYTIC ACTIVITY</scope>
    <scope>COFACTOR</scope>
    <scope>BIOPHYSICOCHEMICAL PROPERTIES</scope>
    <scope>SUBSTRATE SPECIFICITY</scope>
    <scope>REACTION MECHANISM</scope>
    <scope>SUBUNIT</scope>
    <scope>OXOALANINE AT CYS-57</scope>
    <scope>ACTIVE SITE</scope>
    <scope>MUTAGENESIS OF GLN-13; CYS-57; ASN-78; TYR-105; THR-107; HIS-218 AND LYS-337</scope>
    <source>
        <strain evidence="3">DSM 114642 / LMG 32736 / 3841</strain>
    </source>
</reference>
<organism evidence="5">
    <name type="scientific">Rhizobium johnstonii (strain DSM 114642 / LMG 32736 / 3841)</name>
    <name type="common">Rhizobium leguminosarum bv. viciae</name>
    <dbReference type="NCBI Taxonomy" id="216596"/>
    <lineage>
        <taxon>Bacteria</taxon>
        <taxon>Pseudomonadati</taxon>
        <taxon>Pseudomonadota</taxon>
        <taxon>Alphaproteobacteria</taxon>
        <taxon>Hyphomicrobiales</taxon>
        <taxon>Rhizobiaceae</taxon>
        <taxon>Rhizobium/Agrobacterium group</taxon>
        <taxon>Rhizobium</taxon>
        <taxon>Rhizobium johnstonii</taxon>
    </lineage>
</organism>
<proteinExistence type="evidence at protein level"/>
<accession>Q1M964</accession>
<keyword id="KW-0002">3D-structure</keyword>
<keyword id="KW-0106">Calcium</keyword>
<keyword id="KW-0378">Hydrolase</keyword>
<keyword id="KW-0464">Manganese</keyword>
<keyword id="KW-0479">Metal-binding</keyword>
<keyword id="KW-0614">Plasmid</keyword>
<name>RLPMH_RHIJ3</name>
<sequence>MRKKNVLLIVVDQWRADFVPHVLRADGKIDFLKTPNLDRLCREGVTFRNHVTTCVPCGPARASLLTGLYLMNHRAVQNTVPLDQRHLNLGKALRGVGYDPALIGYTTTVPDPRTTSPNDPRFRVLGDLMDGFHPVGAFEPNMEGYFGWVAQNGFDLPEHRPDIWLPEGEDAVAGATDRPSRIPKEFSDSTFFTERALTYLKGRDGKPFFLHLGYYRPHPPFVASAPYHAMYRPEDMPAPIRAANPDIEAAQHPLMKFYVDSIRRGSFFQGAEGSGATLDEAELRQMRATYCGLITEVDDCLGRVFSYLDETGQWDDTLIIFTSDHGEQLGDHHLLGKIGYNDPSFRIPLVIKDAGENARAGAIESGFTESIDVMPTILDWLGGKIPHACDGLSLLPFLSEGRPQDWRTELHYEYDFRDVYYSEPQSFLGLGMNDCSLCVIQDERYKYVHFAALPPLFFDLRHDPNEFTNLADDPAYAALVRDYAQKALSWRLKHADRTLTHYRSGPEGLSERSH</sequence>
<dbReference type="EC" id="3.1.4.-" evidence="2"/>
<dbReference type="EC" id="3.1.3.-" evidence="2"/>
<dbReference type="EMBL" id="AM236083">
    <property type="protein sequence ID" value="CAK03956.1"/>
    <property type="molecule type" value="Genomic_DNA"/>
</dbReference>
<dbReference type="PDB" id="2VQR">
    <property type="method" value="X-ray"/>
    <property type="resolution" value="1.42 A"/>
    <property type="chains" value="A=1-514"/>
</dbReference>
<dbReference type="PDBsum" id="2VQR"/>
<dbReference type="SMR" id="Q1M964"/>
<dbReference type="EnsemblBacteria" id="CAK03956">
    <property type="protein sequence ID" value="CAK03956"/>
    <property type="gene ID" value="pRL90232"/>
</dbReference>
<dbReference type="KEGG" id="rle:pRL90232"/>
<dbReference type="HOGENOM" id="CLU_006332_9_2_5"/>
<dbReference type="EvolutionaryTrace" id="Q1M964"/>
<dbReference type="Proteomes" id="UP000006575">
    <property type="component" value="Plasmid pRL9"/>
</dbReference>
<dbReference type="GO" id="GO:0005737">
    <property type="term" value="C:cytoplasm"/>
    <property type="evidence" value="ECO:0007669"/>
    <property type="project" value="TreeGrafter"/>
</dbReference>
<dbReference type="GO" id="GO:0046872">
    <property type="term" value="F:metal ion binding"/>
    <property type="evidence" value="ECO:0007669"/>
    <property type="project" value="UniProtKB-KW"/>
</dbReference>
<dbReference type="GO" id="GO:0008484">
    <property type="term" value="F:sulfuric ester hydrolase activity"/>
    <property type="evidence" value="ECO:0007669"/>
    <property type="project" value="TreeGrafter"/>
</dbReference>
<dbReference type="CDD" id="cd16028">
    <property type="entry name" value="PMH"/>
    <property type="match status" value="1"/>
</dbReference>
<dbReference type="Gene3D" id="6.10.250.3360">
    <property type="match status" value="1"/>
</dbReference>
<dbReference type="Gene3D" id="3.40.720.10">
    <property type="entry name" value="Alkaline Phosphatase, subunit A"/>
    <property type="match status" value="1"/>
</dbReference>
<dbReference type="InterPro" id="IPR017850">
    <property type="entry name" value="Alkaline_phosphatase_core_sf"/>
</dbReference>
<dbReference type="InterPro" id="IPR054912">
    <property type="entry name" value="HdlasePehA"/>
</dbReference>
<dbReference type="InterPro" id="IPR000917">
    <property type="entry name" value="Sulfatase_N"/>
</dbReference>
<dbReference type="NCBIfam" id="NF045661">
    <property type="entry name" value="HdlasePehA"/>
    <property type="match status" value="1"/>
</dbReference>
<dbReference type="PANTHER" id="PTHR45953">
    <property type="entry name" value="IDURONATE 2-SULFATASE"/>
    <property type="match status" value="1"/>
</dbReference>
<dbReference type="PANTHER" id="PTHR45953:SF1">
    <property type="entry name" value="IDURONATE 2-SULFATASE"/>
    <property type="match status" value="1"/>
</dbReference>
<dbReference type="Pfam" id="PF00884">
    <property type="entry name" value="Sulfatase"/>
    <property type="match status" value="1"/>
</dbReference>
<dbReference type="SUPFAM" id="SSF53649">
    <property type="entry name" value="Alkaline phosphatase-like"/>
    <property type="match status" value="1"/>
</dbReference>
<geneLocation type="plasmid" evidence="5 6">
    <name>pRL9</name>
</geneLocation>